<sequence length="822" mass="90208">MKPALLPWALLLLATALGPGPGPTADAQESCSMRCGALDGPCSCHPTCSGLGTCCLDFRDFCLEILPYSGSMMGGKDFVVRHFKMSSPTDASVICRFKDSIQTLGHVDSSGQVHCVSPLLYESGRIPFTVSLDNGHSFPRAGTWLAVHPNKVSMMEKSELVNETRWQYYGTANTSGNLSLTWHVKSLPTQTITIELWGYEETGMPYSQEWTAKWSYLYPLATHIPNSGSFTFTPKPAPPSYQRWRVGALRIIDSKNYAGQKDVQALWTNDHALAWHLSDDFREDPVAWARTQCQAWEELEDQLPNFLEELPDCPCTLTQARADSGRFFTDYGCDMEQGSVCTYHPGAVHCVRSVQASLRYGSGQQCCYTADGTQLLTADSSGGSTPDRGHDWGAPPFRTPPRVPSMSHWLYDVLSFYYCCLWAPDCPRYMQRRPSNDCRNYRPPRLASAFGDPHFVTFDGTNFTFNGRGEYVLLEAALTDLRVQARAQPGTMSNGTETRGTGLTAVAVQEGNSDVVEVRLANRTGGLEVLLNQEVLSFTEQSWMDLKGMFLSVAAGDRVSIMLASGAGLEVSVQGPFLSVSVLLPEKFLTHTHGLLGTLNNDPTDDFTLHSGRVLPPGTSPQELFLFGANWTVHNASSLLTYDSWFLVHNFLYQPKHDPTFEPLFPSETTLNPSLAQEAAKLCGDDHFCNFDVAATGSLSTGTATRVAHQLHQRRMQSLQPVVSCGWLAPPPNGQKEGNRYLAGSTIYFHCDNGYSLAGAETSTCQADGTWSSPTPKCQPGRSYAVLLGIIFGGLAVVAAVALVYVLLRRRKGNTHVWGAQP</sequence>
<protein>
    <recommendedName>
        <fullName>Sushi domain-containing protein 2</fullName>
    </recommendedName>
</protein>
<dbReference type="EMBL" id="Z92546">
    <property type="protein sequence ID" value="CAB62953.1"/>
    <property type="molecule type" value="Genomic_DNA"/>
</dbReference>
<dbReference type="EMBL" id="AK026431">
    <property type="protein sequence ID" value="BAB15481.1"/>
    <property type="status" value="ALT_FRAME"/>
    <property type="molecule type" value="mRNA"/>
</dbReference>
<dbReference type="EMBL" id="BC033107">
    <property type="protein sequence ID" value="AAH33107.1"/>
    <property type="molecule type" value="mRNA"/>
</dbReference>
<dbReference type="CCDS" id="CCDS13824.1"/>
<dbReference type="RefSeq" id="NP_062547.1">
    <property type="nucleotide sequence ID" value="NM_019601.4"/>
</dbReference>
<dbReference type="SMR" id="Q9UGT4"/>
<dbReference type="BioGRID" id="121109">
    <property type="interactions" value="32"/>
</dbReference>
<dbReference type="FunCoup" id="Q9UGT4">
    <property type="interactions" value="97"/>
</dbReference>
<dbReference type="IntAct" id="Q9UGT4">
    <property type="interactions" value="16"/>
</dbReference>
<dbReference type="MINT" id="Q9UGT4"/>
<dbReference type="STRING" id="9606.ENSP00000351075"/>
<dbReference type="GlyConnect" id="1780">
    <property type="glycosylation" value="6 N-Linked glycans (1 site)"/>
</dbReference>
<dbReference type="GlyCosmos" id="Q9UGT4">
    <property type="glycosylation" value="5 sites, 8 glycans"/>
</dbReference>
<dbReference type="GlyGen" id="Q9UGT4">
    <property type="glycosylation" value="8 sites, 61 N-linked glycans (2 sites), 3 O-linked glycans (3 sites)"/>
</dbReference>
<dbReference type="iPTMnet" id="Q9UGT4"/>
<dbReference type="PhosphoSitePlus" id="Q9UGT4"/>
<dbReference type="BioMuta" id="SUSD2"/>
<dbReference type="DMDM" id="74735010"/>
<dbReference type="jPOST" id="Q9UGT4"/>
<dbReference type="MassIVE" id="Q9UGT4"/>
<dbReference type="PaxDb" id="9606-ENSP00000351075"/>
<dbReference type="PeptideAtlas" id="Q9UGT4"/>
<dbReference type="ProteomicsDB" id="84263"/>
<dbReference type="Pumba" id="Q9UGT4"/>
<dbReference type="Antibodypedia" id="284">
    <property type="antibodies" value="331 antibodies from 23 providers"/>
</dbReference>
<dbReference type="DNASU" id="56241"/>
<dbReference type="Ensembl" id="ENST00000358321.4">
    <property type="protein sequence ID" value="ENSP00000351075.3"/>
    <property type="gene ID" value="ENSG00000099994.11"/>
</dbReference>
<dbReference type="GeneID" id="56241"/>
<dbReference type="KEGG" id="hsa:56241"/>
<dbReference type="MANE-Select" id="ENST00000358321.4">
    <property type="protein sequence ID" value="ENSP00000351075.3"/>
    <property type="RefSeq nucleotide sequence ID" value="NM_019601.4"/>
    <property type="RefSeq protein sequence ID" value="NP_062547.1"/>
</dbReference>
<dbReference type="UCSC" id="uc002zzn.2">
    <property type="organism name" value="human"/>
</dbReference>
<dbReference type="AGR" id="HGNC:30667"/>
<dbReference type="CTD" id="56241"/>
<dbReference type="DisGeNET" id="56241"/>
<dbReference type="GeneCards" id="SUSD2"/>
<dbReference type="HGNC" id="HGNC:30667">
    <property type="gene designation" value="SUSD2"/>
</dbReference>
<dbReference type="HPA" id="ENSG00000099994">
    <property type="expression patterns" value="Tissue enhanced (lung)"/>
</dbReference>
<dbReference type="MIM" id="615825">
    <property type="type" value="gene"/>
</dbReference>
<dbReference type="neXtProt" id="NX_Q9UGT4"/>
<dbReference type="OpenTargets" id="ENSG00000099994"/>
<dbReference type="PharmGKB" id="PA134942464"/>
<dbReference type="VEuPathDB" id="HostDB:ENSG00000099994"/>
<dbReference type="eggNOG" id="KOG4291">
    <property type="taxonomic scope" value="Eukaryota"/>
</dbReference>
<dbReference type="GeneTree" id="ENSGT00730000110943"/>
<dbReference type="HOGENOM" id="CLU_019295_0_0_1"/>
<dbReference type="InParanoid" id="Q9UGT4"/>
<dbReference type="OMA" id="FGADWAI"/>
<dbReference type="OrthoDB" id="6051552at2759"/>
<dbReference type="PAN-GO" id="Q9UGT4">
    <property type="GO annotations" value="1 GO annotation based on evolutionary models"/>
</dbReference>
<dbReference type="PhylomeDB" id="Q9UGT4"/>
<dbReference type="TreeFam" id="TF321438"/>
<dbReference type="PathwayCommons" id="Q9UGT4"/>
<dbReference type="SignaLink" id="Q9UGT4"/>
<dbReference type="BioGRID-ORCS" id="56241">
    <property type="hits" value="9 hits in 1147 CRISPR screens"/>
</dbReference>
<dbReference type="GenomeRNAi" id="56241"/>
<dbReference type="Pharos" id="Q9UGT4">
    <property type="development level" value="Tbio"/>
</dbReference>
<dbReference type="PRO" id="PR:Q9UGT4"/>
<dbReference type="Proteomes" id="UP000005640">
    <property type="component" value="Chromosome 22"/>
</dbReference>
<dbReference type="RNAct" id="Q9UGT4">
    <property type="molecule type" value="protein"/>
</dbReference>
<dbReference type="Bgee" id="ENSG00000099994">
    <property type="expression patterns" value="Expressed in ileal mucosa and 133 other cell types or tissues"/>
</dbReference>
<dbReference type="ExpressionAtlas" id="Q9UGT4">
    <property type="expression patterns" value="baseline and differential"/>
</dbReference>
<dbReference type="GO" id="GO:0070062">
    <property type="term" value="C:extracellular exosome"/>
    <property type="evidence" value="ECO:0007005"/>
    <property type="project" value="UniProtKB"/>
</dbReference>
<dbReference type="GO" id="GO:0005615">
    <property type="term" value="C:extracellular space"/>
    <property type="evidence" value="ECO:0000318"/>
    <property type="project" value="GO_Central"/>
</dbReference>
<dbReference type="GO" id="GO:0005886">
    <property type="term" value="C:plasma membrane"/>
    <property type="evidence" value="ECO:0000314"/>
    <property type="project" value="UniProtKB"/>
</dbReference>
<dbReference type="GO" id="GO:1902807">
    <property type="term" value="P:negative regulation of cell cycle G1/S phase transition"/>
    <property type="evidence" value="ECO:0000314"/>
    <property type="project" value="UniProtKB"/>
</dbReference>
<dbReference type="GO" id="GO:0051782">
    <property type="term" value="P:negative regulation of cell division"/>
    <property type="evidence" value="ECO:0000314"/>
    <property type="project" value="UniProtKB"/>
</dbReference>
<dbReference type="CDD" id="cd00033">
    <property type="entry name" value="CCP"/>
    <property type="match status" value="1"/>
</dbReference>
<dbReference type="FunFam" id="2.10.70.10:FF:000105">
    <property type="entry name" value="Sushi domain containing 2"/>
    <property type="match status" value="1"/>
</dbReference>
<dbReference type="FunFam" id="4.10.410.20:FF:000010">
    <property type="entry name" value="Sushi domain containing 2"/>
    <property type="match status" value="1"/>
</dbReference>
<dbReference type="Gene3D" id="4.10.410.20">
    <property type="match status" value="1"/>
</dbReference>
<dbReference type="Gene3D" id="2.10.70.10">
    <property type="entry name" value="Complement Module, domain 1"/>
    <property type="match status" value="1"/>
</dbReference>
<dbReference type="InterPro" id="IPR005533">
    <property type="entry name" value="AMOP_dom"/>
</dbReference>
<dbReference type="InterPro" id="IPR056619">
    <property type="entry name" value="C8-3_MUC4"/>
</dbReference>
<dbReference type="InterPro" id="IPR051495">
    <property type="entry name" value="Epithelial_Barrier/Signaling"/>
</dbReference>
<dbReference type="InterPro" id="IPR036024">
    <property type="entry name" value="Somatomedin_B-like_dom_sf"/>
</dbReference>
<dbReference type="InterPro" id="IPR001212">
    <property type="entry name" value="Somatomedin_B_dom"/>
</dbReference>
<dbReference type="InterPro" id="IPR035976">
    <property type="entry name" value="Sushi/SCR/CCP_sf"/>
</dbReference>
<dbReference type="InterPro" id="IPR000436">
    <property type="entry name" value="Sushi_SCR_CCP_dom"/>
</dbReference>
<dbReference type="InterPro" id="IPR001846">
    <property type="entry name" value="VWF_type-D"/>
</dbReference>
<dbReference type="PANTHER" id="PTHR13802">
    <property type="entry name" value="MUCIN 4-RELATED"/>
    <property type="match status" value="1"/>
</dbReference>
<dbReference type="PANTHER" id="PTHR13802:SF63">
    <property type="entry name" value="SUSHI DOMAIN-CONTAINING PROTEIN 2"/>
    <property type="match status" value="1"/>
</dbReference>
<dbReference type="Pfam" id="PF03782">
    <property type="entry name" value="AMOP"/>
    <property type="match status" value="1"/>
</dbReference>
<dbReference type="Pfam" id="PF23263">
    <property type="entry name" value="C8-3_MUC4"/>
    <property type="match status" value="1"/>
</dbReference>
<dbReference type="Pfam" id="PF00084">
    <property type="entry name" value="Sushi"/>
    <property type="match status" value="1"/>
</dbReference>
<dbReference type="Pfam" id="PF00094">
    <property type="entry name" value="VWD"/>
    <property type="match status" value="1"/>
</dbReference>
<dbReference type="SMART" id="SM00723">
    <property type="entry name" value="AMOP"/>
    <property type="match status" value="1"/>
</dbReference>
<dbReference type="SMART" id="SM00032">
    <property type="entry name" value="CCP"/>
    <property type="match status" value="1"/>
</dbReference>
<dbReference type="SMART" id="SM00216">
    <property type="entry name" value="VWD"/>
    <property type="match status" value="1"/>
</dbReference>
<dbReference type="SUPFAM" id="SSF57535">
    <property type="entry name" value="Complement control module/SCR domain"/>
    <property type="match status" value="1"/>
</dbReference>
<dbReference type="SUPFAM" id="SSF90188">
    <property type="entry name" value="Somatomedin B domain"/>
    <property type="match status" value="1"/>
</dbReference>
<dbReference type="PROSITE" id="PS50856">
    <property type="entry name" value="AMOP"/>
    <property type="match status" value="1"/>
</dbReference>
<dbReference type="PROSITE" id="PS00524">
    <property type="entry name" value="SMB_1"/>
    <property type="match status" value="1"/>
</dbReference>
<dbReference type="PROSITE" id="PS50958">
    <property type="entry name" value="SMB_2"/>
    <property type="match status" value="1"/>
</dbReference>
<dbReference type="PROSITE" id="PS50923">
    <property type="entry name" value="SUSHI"/>
    <property type="match status" value="1"/>
</dbReference>
<dbReference type="PROSITE" id="PS51233">
    <property type="entry name" value="VWFD"/>
    <property type="match status" value="1"/>
</dbReference>
<accession>Q9UGT4</accession>
<accession>Q9H5Y6</accession>
<name>SUSD2_HUMAN</name>
<keyword id="KW-1003">Cell membrane</keyword>
<keyword id="KW-1015">Disulfide bond</keyword>
<keyword id="KW-0325">Glycoprotein</keyword>
<keyword id="KW-0472">Membrane</keyword>
<keyword id="KW-1267">Proteomics identification</keyword>
<keyword id="KW-0675">Receptor</keyword>
<keyword id="KW-1185">Reference proteome</keyword>
<keyword id="KW-0732">Signal</keyword>
<keyword id="KW-0768">Sushi</keyword>
<keyword id="KW-0812">Transmembrane</keyword>
<keyword id="KW-1133">Transmembrane helix</keyword>
<keyword id="KW-0043">Tumor suppressor</keyword>
<feature type="signal peptide" evidence="3">
    <location>
        <begin position="1"/>
        <end position="27"/>
    </location>
</feature>
<feature type="chain" id="PRO_0000249439" description="Sushi domain-containing protein 2">
    <location>
        <begin position="28"/>
        <end position="822"/>
    </location>
</feature>
<feature type="topological domain" description="Extracellular" evidence="3">
    <location>
        <begin position="28"/>
        <end position="785"/>
    </location>
</feature>
<feature type="transmembrane region" description="Helical" evidence="3">
    <location>
        <begin position="786"/>
        <end position="806"/>
    </location>
</feature>
<feature type="topological domain" description="Cytoplasmic" evidence="3">
    <location>
        <begin position="807"/>
        <end position="822"/>
    </location>
</feature>
<feature type="domain" description="SMB" evidence="6">
    <location>
        <begin position="28"/>
        <end position="66"/>
    </location>
</feature>
<feature type="domain" description="AMOP" evidence="5">
    <location>
        <begin position="285"/>
        <end position="433"/>
    </location>
</feature>
<feature type="domain" description="VWFD" evidence="7">
    <location>
        <begin position="445"/>
        <end position="639"/>
    </location>
</feature>
<feature type="domain" description="Sushi" evidence="4">
    <location>
        <begin position="723"/>
        <end position="780"/>
    </location>
</feature>
<feature type="glycosylation site" description="N-linked (GlcNAc...) asparagine" evidence="3">
    <location>
        <position position="162"/>
    </location>
</feature>
<feature type="glycosylation site" description="N-linked (GlcNAc...) asparagine" evidence="3">
    <location>
        <position position="177"/>
    </location>
</feature>
<feature type="glycosylation site" description="N-linked (GlcNAc...) asparagine" evidence="8 9">
    <location>
        <position position="522"/>
    </location>
</feature>
<feature type="disulfide bond" description="Alternate" evidence="6">
    <location>
        <begin position="31"/>
        <end position="44"/>
    </location>
</feature>
<feature type="disulfide bond" description="Alternate" evidence="6">
    <location>
        <begin position="31"/>
        <end position="35"/>
    </location>
</feature>
<feature type="disulfide bond" description="Alternate" evidence="6">
    <location>
        <begin position="35"/>
        <end position="62"/>
    </location>
</feature>
<feature type="disulfide bond" description="Alternate" evidence="6">
    <location>
        <begin position="42"/>
        <end position="55"/>
    </location>
</feature>
<feature type="disulfide bond" description="Alternate" evidence="6">
    <location>
        <begin position="42"/>
        <end position="44"/>
    </location>
</feature>
<feature type="disulfide bond" evidence="2">
    <location>
        <begin position="48"/>
        <end position="54"/>
    </location>
</feature>
<feature type="disulfide bond" description="Alternate" evidence="6">
    <location>
        <begin position="55"/>
        <end position="62"/>
    </location>
</feature>
<feature type="disulfide bond" evidence="1">
    <location>
        <begin position="725"/>
        <end position="765"/>
    </location>
</feature>
<feature type="disulfide bond" evidence="1">
    <location>
        <begin position="751"/>
        <end position="778"/>
    </location>
</feature>
<feature type="sequence variant" id="VAR_027416" description="In dbSNP:rs56289213.">
    <original>R</original>
    <variation>Q</variation>
    <location>
        <position position="59"/>
    </location>
</feature>
<feature type="sequence variant" id="VAR_027417" description="In dbSNP:rs9680526.">
    <original>S</original>
    <variation>T</variation>
    <location>
        <position position="110"/>
    </location>
</feature>
<feature type="sequence variant" id="VAR_027418" description="In dbSNP:rs8141797.">
    <original>N</original>
    <variation>S</variation>
    <location>
        <position position="466"/>
    </location>
</feature>
<feature type="sequence conflict" description="In Ref. 2; BAB15481." evidence="12" ref="2">
    <original>Q</original>
    <variation>R</variation>
    <location>
        <position position="364"/>
    </location>
</feature>
<reference key="1">
    <citation type="journal article" date="1999" name="Nature">
        <title>The DNA sequence of human chromosome 22.</title>
        <authorList>
            <person name="Dunham I."/>
            <person name="Hunt A.R."/>
            <person name="Collins J.E."/>
            <person name="Bruskiewich R."/>
            <person name="Beare D.M."/>
            <person name="Clamp M."/>
            <person name="Smink L.J."/>
            <person name="Ainscough R."/>
            <person name="Almeida J.P."/>
            <person name="Babbage A.K."/>
            <person name="Bagguley C."/>
            <person name="Bailey J."/>
            <person name="Barlow K.F."/>
            <person name="Bates K.N."/>
            <person name="Beasley O.P."/>
            <person name="Bird C.P."/>
            <person name="Blakey S.E."/>
            <person name="Bridgeman A.M."/>
            <person name="Buck D."/>
            <person name="Burgess J."/>
            <person name="Burrill W.D."/>
            <person name="Burton J."/>
            <person name="Carder C."/>
            <person name="Carter N.P."/>
            <person name="Chen Y."/>
            <person name="Clark G."/>
            <person name="Clegg S.M."/>
            <person name="Cobley V.E."/>
            <person name="Cole C.G."/>
            <person name="Collier R.E."/>
            <person name="Connor R."/>
            <person name="Conroy D."/>
            <person name="Corby N.R."/>
            <person name="Coville G.J."/>
            <person name="Cox A.V."/>
            <person name="Davis J."/>
            <person name="Dawson E."/>
            <person name="Dhami P.D."/>
            <person name="Dockree C."/>
            <person name="Dodsworth S.J."/>
            <person name="Durbin R.M."/>
            <person name="Ellington A.G."/>
            <person name="Evans K.L."/>
            <person name="Fey J.M."/>
            <person name="Fleming K."/>
            <person name="French L."/>
            <person name="Garner A.A."/>
            <person name="Gilbert J.G.R."/>
            <person name="Goward M.E."/>
            <person name="Grafham D.V."/>
            <person name="Griffiths M.N.D."/>
            <person name="Hall C."/>
            <person name="Hall R.E."/>
            <person name="Hall-Tamlyn G."/>
            <person name="Heathcott R.W."/>
            <person name="Ho S."/>
            <person name="Holmes S."/>
            <person name="Hunt S.E."/>
            <person name="Jones M.C."/>
            <person name="Kershaw J."/>
            <person name="Kimberley A.M."/>
            <person name="King A."/>
            <person name="Laird G.K."/>
            <person name="Langford C.F."/>
            <person name="Leversha M.A."/>
            <person name="Lloyd C."/>
            <person name="Lloyd D.M."/>
            <person name="Martyn I.D."/>
            <person name="Mashreghi-Mohammadi M."/>
            <person name="Matthews L.H."/>
            <person name="Mccann O.T."/>
            <person name="Mcclay J."/>
            <person name="Mclaren S."/>
            <person name="McMurray A.A."/>
            <person name="Milne S.A."/>
            <person name="Mortimore B.J."/>
            <person name="Odell C.N."/>
            <person name="Pavitt R."/>
            <person name="Pearce A.V."/>
            <person name="Pearson D."/>
            <person name="Phillimore B.J.C.T."/>
            <person name="Phillips S.H."/>
            <person name="Plumb R.W."/>
            <person name="Ramsay H."/>
            <person name="Ramsey Y."/>
            <person name="Rogers L."/>
            <person name="Ross M.T."/>
            <person name="Scott C.E."/>
            <person name="Sehra H.K."/>
            <person name="Skuce C.D."/>
            <person name="Smalley S."/>
            <person name="Smith M.L."/>
            <person name="Soderlund C."/>
            <person name="Spragon L."/>
            <person name="Steward C.A."/>
            <person name="Sulston J.E."/>
            <person name="Swann R.M."/>
            <person name="Vaudin M."/>
            <person name="Wall M."/>
            <person name="Wallis J.M."/>
            <person name="Whiteley M.N."/>
            <person name="Willey D.L."/>
            <person name="Williams L."/>
            <person name="Williams S.A."/>
            <person name="Williamson H."/>
            <person name="Wilmer T.E."/>
            <person name="Wilming L."/>
            <person name="Wright C.L."/>
            <person name="Hubbard T."/>
            <person name="Bentley D.R."/>
            <person name="Beck S."/>
            <person name="Rogers J."/>
            <person name="Shimizu N."/>
            <person name="Minoshima S."/>
            <person name="Kawasaki K."/>
            <person name="Sasaki T."/>
            <person name="Asakawa S."/>
            <person name="Kudoh J."/>
            <person name="Shintani A."/>
            <person name="Shibuya K."/>
            <person name="Yoshizaki Y."/>
            <person name="Aoki N."/>
            <person name="Mitsuyama S."/>
            <person name="Roe B.A."/>
            <person name="Chen F."/>
            <person name="Chu L."/>
            <person name="Crabtree J."/>
            <person name="Deschamps S."/>
            <person name="Do A."/>
            <person name="Do T."/>
            <person name="Dorman A."/>
            <person name="Fang F."/>
            <person name="Fu Y."/>
            <person name="Hu P."/>
            <person name="Hua A."/>
            <person name="Kenton S."/>
            <person name="Lai H."/>
            <person name="Lao H.I."/>
            <person name="Lewis J."/>
            <person name="Lewis S."/>
            <person name="Lin S.-P."/>
            <person name="Loh P."/>
            <person name="Malaj E."/>
            <person name="Nguyen T."/>
            <person name="Pan H."/>
            <person name="Phan S."/>
            <person name="Qi S."/>
            <person name="Qian Y."/>
            <person name="Ray L."/>
            <person name="Ren Q."/>
            <person name="Shaull S."/>
            <person name="Sloan D."/>
            <person name="Song L."/>
            <person name="Wang Q."/>
            <person name="Wang Y."/>
            <person name="Wang Z."/>
            <person name="White J."/>
            <person name="Willingham D."/>
            <person name="Wu H."/>
            <person name="Yao Z."/>
            <person name="Zhan M."/>
            <person name="Zhang G."/>
            <person name="Chissoe S."/>
            <person name="Murray J."/>
            <person name="Miller N."/>
            <person name="Minx P."/>
            <person name="Fulton R."/>
            <person name="Johnson D."/>
            <person name="Bemis G."/>
            <person name="Bentley D."/>
            <person name="Bradshaw H."/>
            <person name="Bourne S."/>
            <person name="Cordes M."/>
            <person name="Du Z."/>
            <person name="Fulton L."/>
            <person name="Goela D."/>
            <person name="Graves T."/>
            <person name="Hawkins J."/>
            <person name="Hinds K."/>
            <person name="Kemp K."/>
            <person name="Latreille P."/>
            <person name="Layman D."/>
            <person name="Ozersky P."/>
            <person name="Rohlfing T."/>
            <person name="Scheet P."/>
            <person name="Walker C."/>
            <person name="Wamsley A."/>
            <person name="Wohldmann P."/>
            <person name="Pepin K."/>
            <person name="Nelson J."/>
            <person name="Korf I."/>
            <person name="Bedell J.A."/>
            <person name="Hillier L.W."/>
            <person name="Mardis E."/>
            <person name="Waterston R."/>
            <person name="Wilson R."/>
            <person name="Emanuel B.S."/>
            <person name="Shaikh T."/>
            <person name="Kurahashi H."/>
            <person name="Saitta S."/>
            <person name="Budarf M.L."/>
            <person name="McDermid H.E."/>
            <person name="Johnson A."/>
            <person name="Wong A.C.C."/>
            <person name="Morrow B.E."/>
            <person name="Edelmann L."/>
            <person name="Kim U.J."/>
            <person name="Shizuya H."/>
            <person name="Simon M.I."/>
            <person name="Dumanski J.P."/>
            <person name="Peyrard M."/>
            <person name="Kedra D."/>
            <person name="Seroussi E."/>
            <person name="Fransson I."/>
            <person name="Tapia I."/>
            <person name="Bruder C.E."/>
            <person name="O'Brien K.P."/>
            <person name="Wilkinson P."/>
            <person name="Bodenteich A."/>
            <person name="Hartman K."/>
            <person name="Hu X."/>
            <person name="Khan A.S."/>
            <person name="Lane L."/>
            <person name="Tilahun Y."/>
            <person name="Wright H."/>
        </authorList>
    </citation>
    <scope>NUCLEOTIDE SEQUENCE [LARGE SCALE GENOMIC DNA]</scope>
</reference>
<reference key="2">
    <citation type="journal article" date="2004" name="Nat. Genet.">
        <title>Complete sequencing and characterization of 21,243 full-length human cDNAs.</title>
        <authorList>
            <person name="Ota T."/>
            <person name="Suzuki Y."/>
            <person name="Nishikawa T."/>
            <person name="Otsuki T."/>
            <person name="Sugiyama T."/>
            <person name="Irie R."/>
            <person name="Wakamatsu A."/>
            <person name="Hayashi K."/>
            <person name="Sato H."/>
            <person name="Nagai K."/>
            <person name="Kimura K."/>
            <person name="Makita H."/>
            <person name="Sekine M."/>
            <person name="Obayashi M."/>
            <person name="Nishi T."/>
            <person name="Shibahara T."/>
            <person name="Tanaka T."/>
            <person name="Ishii S."/>
            <person name="Yamamoto J."/>
            <person name="Saito K."/>
            <person name="Kawai Y."/>
            <person name="Isono Y."/>
            <person name="Nakamura Y."/>
            <person name="Nagahari K."/>
            <person name="Murakami K."/>
            <person name="Yasuda T."/>
            <person name="Iwayanagi T."/>
            <person name="Wagatsuma M."/>
            <person name="Shiratori A."/>
            <person name="Sudo H."/>
            <person name="Hosoiri T."/>
            <person name="Kaku Y."/>
            <person name="Kodaira H."/>
            <person name="Kondo H."/>
            <person name="Sugawara M."/>
            <person name="Takahashi M."/>
            <person name="Kanda K."/>
            <person name="Yokoi T."/>
            <person name="Furuya T."/>
            <person name="Kikkawa E."/>
            <person name="Omura Y."/>
            <person name="Abe K."/>
            <person name="Kamihara K."/>
            <person name="Katsuta N."/>
            <person name="Sato K."/>
            <person name="Tanikawa M."/>
            <person name="Yamazaki M."/>
            <person name="Ninomiya K."/>
            <person name="Ishibashi T."/>
            <person name="Yamashita H."/>
            <person name="Murakawa K."/>
            <person name="Fujimori K."/>
            <person name="Tanai H."/>
            <person name="Kimata M."/>
            <person name="Watanabe M."/>
            <person name="Hiraoka S."/>
            <person name="Chiba Y."/>
            <person name="Ishida S."/>
            <person name="Ono Y."/>
            <person name="Takiguchi S."/>
            <person name="Watanabe S."/>
            <person name="Yosida M."/>
            <person name="Hotuta T."/>
            <person name="Kusano J."/>
            <person name="Kanehori K."/>
            <person name="Takahashi-Fujii A."/>
            <person name="Hara H."/>
            <person name="Tanase T.-O."/>
            <person name="Nomura Y."/>
            <person name="Togiya S."/>
            <person name="Komai F."/>
            <person name="Hara R."/>
            <person name="Takeuchi K."/>
            <person name="Arita M."/>
            <person name="Imose N."/>
            <person name="Musashino K."/>
            <person name="Yuuki H."/>
            <person name="Oshima A."/>
            <person name="Sasaki N."/>
            <person name="Aotsuka S."/>
            <person name="Yoshikawa Y."/>
            <person name="Matsunawa H."/>
            <person name="Ichihara T."/>
            <person name="Shiohata N."/>
            <person name="Sano S."/>
            <person name="Moriya S."/>
            <person name="Momiyama H."/>
            <person name="Satoh N."/>
            <person name="Takami S."/>
            <person name="Terashima Y."/>
            <person name="Suzuki O."/>
            <person name="Nakagawa S."/>
            <person name="Senoh A."/>
            <person name="Mizoguchi H."/>
            <person name="Goto Y."/>
            <person name="Shimizu F."/>
            <person name="Wakebe H."/>
            <person name="Hishigaki H."/>
            <person name="Watanabe T."/>
            <person name="Sugiyama A."/>
            <person name="Takemoto M."/>
            <person name="Kawakami B."/>
            <person name="Yamazaki M."/>
            <person name="Watanabe K."/>
            <person name="Kumagai A."/>
            <person name="Itakura S."/>
            <person name="Fukuzumi Y."/>
            <person name="Fujimori Y."/>
            <person name="Komiyama M."/>
            <person name="Tashiro H."/>
            <person name="Tanigami A."/>
            <person name="Fujiwara T."/>
            <person name="Ono T."/>
            <person name="Yamada K."/>
            <person name="Fujii Y."/>
            <person name="Ozaki K."/>
            <person name="Hirao M."/>
            <person name="Ohmori Y."/>
            <person name="Kawabata A."/>
            <person name="Hikiji T."/>
            <person name="Kobatake N."/>
            <person name="Inagaki H."/>
            <person name="Ikema Y."/>
            <person name="Okamoto S."/>
            <person name="Okitani R."/>
            <person name="Kawakami T."/>
            <person name="Noguchi S."/>
            <person name="Itoh T."/>
            <person name="Shigeta K."/>
            <person name="Senba T."/>
            <person name="Matsumura K."/>
            <person name="Nakajima Y."/>
            <person name="Mizuno T."/>
            <person name="Morinaga M."/>
            <person name="Sasaki M."/>
            <person name="Togashi T."/>
            <person name="Oyama M."/>
            <person name="Hata H."/>
            <person name="Watanabe M."/>
            <person name="Komatsu T."/>
            <person name="Mizushima-Sugano J."/>
            <person name="Satoh T."/>
            <person name="Shirai Y."/>
            <person name="Takahashi Y."/>
            <person name="Nakagawa K."/>
            <person name="Okumura K."/>
            <person name="Nagase T."/>
            <person name="Nomura N."/>
            <person name="Kikuchi H."/>
            <person name="Masuho Y."/>
            <person name="Yamashita R."/>
            <person name="Nakai K."/>
            <person name="Yada T."/>
            <person name="Nakamura Y."/>
            <person name="Ohara O."/>
            <person name="Isogai T."/>
            <person name="Sugano S."/>
        </authorList>
    </citation>
    <scope>NUCLEOTIDE SEQUENCE [LARGE SCALE MRNA]</scope>
    <source>
        <tissue>Ileal mucosa</tissue>
    </source>
</reference>
<reference key="3">
    <citation type="journal article" date="2004" name="Genome Res.">
        <title>The status, quality, and expansion of the NIH full-length cDNA project: the Mammalian Gene Collection (MGC).</title>
        <authorList>
            <consortium name="The MGC Project Team"/>
        </authorList>
    </citation>
    <scope>NUCLEOTIDE SEQUENCE [LARGE SCALE MRNA]</scope>
    <source>
        <tissue>Prostate</tissue>
    </source>
</reference>
<reference key="4">
    <citation type="journal article" date="2005" name="J. Proteome Res.">
        <title>Human plasma N-glycoproteome analysis by immunoaffinity subtraction, hydrazide chemistry, and mass spectrometry.</title>
        <authorList>
            <person name="Liu T."/>
            <person name="Qian W.-J."/>
            <person name="Gritsenko M.A."/>
            <person name="Camp D.G. II"/>
            <person name="Monroe M.E."/>
            <person name="Moore R.J."/>
            <person name="Smith R.D."/>
        </authorList>
    </citation>
    <scope>GLYCOSYLATION [LARGE SCALE ANALYSIS] AT ASN-522</scope>
    <source>
        <tissue>Plasma</tissue>
    </source>
</reference>
<reference key="5">
    <citation type="journal article" date="2009" name="J. Proteome Res.">
        <title>Glycoproteomics analysis of human liver tissue by combination of multiple enzyme digestion and hydrazide chemistry.</title>
        <authorList>
            <person name="Chen R."/>
            <person name="Jiang X."/>
            <person name="Sun D."/>
            <person name="Han G."/>
            <person name="Wang F."/>
            <person name="Ye M."/>
            <person name="Wang L."/>
            <person name="Zou H."/>
        </authorList>
    </citation>
    <scope>GLYCOSYLATION [LARGE SCALE ANALYSIS] AT ASN-522</scope>
    <source>
        <tissue>Liver</tissue>
    </source>
</reference>
<reference key="6">
    <citation type="journal article" date="2013" name="Mol. Cancer Res.">
        <title>Multiple functions of sushi domain containing 2 (SUSD2) in breast tumorigenesis.</title>
        <authorList>
            <person name="Watson A.P."/>
            <person name="Evans R.L."/>
            <person name="Egland K.A."/>
        </authorList>
    </citation>
    <scope>TISSUE SPECIFICITY</scope>
    <scope>SUBCELLULAR LOCATION</scope>
    <scope>FUNCTION</scope>
    <scope>INTERACTION WITH LGALS1</scope>
</reference>
<reference key="7">
    <citation type="journal article" date="2014" name="Sci. Rep.">
        <title>CSBF/C10orf99, a novel potential cytokine, inhibits colon cancer cell growth through inducing G1 arrest.</title>
        <authorList>
            <person name="Pan W."/>
            <person name="Cheng Y."/>
            <person name="Zhang H."/>
            <person name="Liu B."/>
            <person name="Mo X."/>
            <person name="Li T."/>
            <person name="Li L."/>
            <person name="Cheng X."/>
            <person name="Zhang L."/>
            <person name="Ji J."/>
            <person name="Wang P."/>
            <person name="Han W."/>
        </authorList>
    </citation>
    <scope>FUNCTION</scope>
    <scope>SUBCELLULAR LOCATION</scope>
    <scope>TISSUE SPECIFICITY</scope>
    <scope>INTERACTION WITH GPR15LG</scope>
</reference>
<proteinExistence type="evidence at protein level"/>
<gene>
    <name type="primary">SUSD2</name>
</gene>
<comment type="function">
    <text evidence="10 11">May be a cytokine receptor for GPR15LG. May be a tumor suppressor; together with GPR15LG has a growth inhibitory effect on colon cancer cells which includes G1 cell cycle arrest (PubMed:25351403). May play a role in breast tumorigenesis (PubMed:23131994).</text>
</comment>
<comment type="subunit">
    <text evidence="10 11">Interacts with LGALS1; leads to an increased amount of LGALS1 on the cell surface (PubMed:23131994). Interacts with GPR15LG; the interaction is direct (PubMed:25351403).</text>
</comment>
<comment type="interaction">
    <interactant intactId="EBI-1054721">
        <id>Q9UGT4</id>
    </interactant>
    <interactant intactId="EBI-10171774">
        <id>P60410</id>
        <label>KRTAP10-8</label>
    </interactant>
    <organismsDiffer>false</organismsDiffer>
    <experiments>3</experiments>
</comment>
<comment type="interaction">
    <interactant intactId="EBI-1054721">
        <id>Q9UGT4</id>
    </interactant>
    <interactant intactId="EBI-949753">
        <id>Q63HR2</id>
        <label>TNS2</label>
    </interactant>
    <organismsDiffer>false</organismsDiffer>
    <experiments>3</experiments>
</comment>
<comment type="subcellular location">
    <subcellularLocation>
        <location evidence="10 11">Cell membrane</location>
        <topology evidence="12">Single-pass type I membrane protein</topology>
    </subcellularLocation>
    <text evidence="10">SUSD2 and LGALS1 co-localized in very specific, punctate regions along the cell membrane of breast cancer cells.</text>
</comment>
<comment type="tissue specificity">
    <text evidence="10 11">Highly expressed in breast cancer, but shows a restricted expression pattern in normal tissues such as adipose, adrenal gland, kidney, lung, mammary gland, placenta, thyroid, trachea, and uterus (PubMed:23131994). Also expressed in colon; down-regulated in colon cancer tissues (PubMed:25351403).</text>
</comment>
<comment type="sequence caution" evidence="12">
    <conflict type="frameshift">
        <sequence resource="EMBL-CDS" id="BAB15481"/>
    </conflict>
</comment>
<organism>
    <name type="scientific">Homo sapiens</name>
    <name type="common">Human</name>
    <dbReference type="NCBI Taxonomy" id="9606"/>
    <lineage>
        <taxon>Eukaryota</taxon>
        <taxon>Metazoa</taxon>
        <taxon>Chordata</taxon>
        <taxon>Craniata</taxon>
        <taxon>Vertebrata</taxon>
        <taxon>Euteleostomi</taxon>
        <taxon>Mammalia</taxon>
        <taxon>Eutheria</taxon>
        <taxon>Euarchontoglires</taxon>
        <taxon>Primates</taxon>
        <taxon>Haplorrhini</taxon>
        <taxon>Catarrhini</taxon>
        <taxon>Hominidae</taxon>
        <taxon>Homo</taxon>
    </lineage>
</organism>
<evidence type="ECO:0000250" key="1"/>
<evidence type="ECO:0000250" key="2">
    <source>
        <dbReference type="UniProtKB" id="Q9DBX3"/>
    </source>
</evidence>
<evidence type="ECO:0000255" key="3"/>
<evidence type="ECO:0000255" key="4">
    <source>
        <dbReference type="PROSITE-ProRule" id="PRU00302"/>
    </source>
</evidence>
<evidence type="ECO:0000255" key="5">
    <source>
        <dbReference type="PROSITE-ProRule" id="PRU00347"/>
    </source>
</evidence>
<evidence type="ECO:0000255" key="6">
    <source>
        <dbReference type="PROSITE-ProRule" id="PRU00350"/>
    </source>
</evidence>
<evidence type="ECO:0000255" key="7">
    <source>
        <dbReference type="PROSITE-ProRule" id="PRU00580"/>
    </source>
</evidence>
<evidence type="ECO:0000269" key="8">
    <source>
    </source>
</evidence>
<evidence type="ECO:0000269" key="9">
    <source>
    </source>
</evidence>
<evidence type="ECO:0000269" key="10">
    <source>
    </source>
</evidence>
<evidence type="ECO:0000269" key="11">
    <source>
    </source>
</evidence>
<evidence type="ECO:0000305" key="12"/>